<dbReference type="EMBL" id="BC034083">
    <property type="protein sequence ID" value="AAH34083.1"/>
    <property type="molecule type" value="mRNA"/>
</dbReference>
<dbReference type="EMBL" id="BC043451">
    <property type="protein sequence ID" value="AAH43451.1"/>
    <property type="molecule type" value="mRNA"/>
</dbReference>
<dbReference type="EMBL" id="BC054483">
    <property type="protein sequence ID" value="AAH54483.1"/>
    <property type="molecule type" value="mRNA"/>
</dbReference>
<dbReference type="CCDS" id="CCDS21831.1">
    <molecule id="Q7TQH0-1"/>
</dbReference>
<dbReference type="RefSeq" id="NP_001348416.1">
    <molecule id="Q7TQH0-2"/>
    <property type="nucleotide sequence ID" value="NM_001361487.2"/>
</dbReference>
<dbReference type="RefSeq" id="NP_898841.1">
    <molecule id="Q7TQH0-1"/>
    <property type="nucleotide sequence ID" value="NM_183020.3"/>
</dbReference>
<dbReference type="RefSeq" id="XP_006507788.1">
    <molecule id="Q7TQH0-3"/>
    <property type="nucleotide sequence ID" value="XM_006507725.3"/>
</dbReference>
<dbReference type="SMR" id="Q7TQH0"/>
<dbReference type="BioGRID" id="231460">
    <property type="interactions" value="27"/>
</dbReference>
<dbReference type="FunCoup" id="Q7TQH0">
    <property type="interactions" value="3493"/>
</dbReference>
<dbReference type="IntAct" id="Q7TQH0">
    <property type="interactions" value="8"/>
</dbReference>
<dbReference type="MINT" id="Q7TQH0"/>
<dbReference type="STRING" id="10090.ENSMUSP00000035415"/>
<dbReference type="GlyGen" id="Q7TQH0">
    <property type="glycosylation" value="15 sites, 1 N-linked glycan (2 sites), 1 O-linked glycan (11 sites)"/>
</dbReference>
<dbReference type="iPTMnet" id="Q7TQH0"/>
<dbReference type="MetOSite" id="Q7TQH0"/>
<dbReference type="PhosphoSitePlus" id="Q7TQH0"/>
<dbReference type="SwissPalm" id="Q7TQH0"/>
<dbReference type="jPOST" id="Q7TQH0"/>
<dbReference type="PaxDb" id="10090-ENSMUSP00000035415"/>
<dbReference type="PeptideAtlas" id="Q7TQH0"/>
<dbReference type="ProteomicsDB" id="273628">
    <molecule id="Q7TQH0-1"/>
</dbReference>
<dbReference type="ProteomicsDB" id="273629">
    <molecule id="Q7TQH0-2"/>
</dbReference>
<dbReference type="ProteomicsDB" id="273630">
    <molecule id="Q7TQH0-3"/>
</dbReference>
<dbReference type="Pumba" id="Q7TQH0"/>
<dbReference type="Antibodypedia" id="26552">
    <property type="antibodies" value="127 antibodies from 24 providers"/>
</dbReference>
<dbReference type="DNASU" id="233871"/>
<dbReference type="Ensembl" id="ENSMUST00000040202.15">
    <molecule id="Q7TQH0-1"/>
    <property type="protein sequence ID" value="ENSMUSP00000035415.9"/>
    <property type="gene ID" value="ENSMUSG00000032637.16"/>
</dbReference>
<dbReference type="GeneID" id="233871"/>
<dbReference type="KEGG" id="mmu:233871"/>
<dbReference type="UCSC" id="uc009jrr.1">
    <molecule id="Q7TQH0-3"/>
    <property type="organism name" value="mouse"/>
</dbReference>
<dbReference type="UCSC" id="uc009jrs.1">
    <molecule id="Q7TQH0-1"/>
    <property type="organism name" value="mouse"/>
</dbReference>
<dbReference type="UCSC" id="uc009jru.1">
    <molecule id="Q7TQH0-2"/>
    <property type="organism name" value="mouse"/>
</dbReference>
<dbReference type="AGR" id="MGI:2446242"/>
<dbReference type="CTD" id="11273"/>
<dbReference type="MGI" id="MGI:2446242">
    <property type="gene designation" value="Atxn2l"/>
</dbReference>
<dbReference type="VEuPathDB" id="HostDB:ENSMUSG00000032637"/>
<dbReference type="eggNOG" id="KOG2375">
    <property type="taxonomic scope" value="Eukaryota"/>
</dbReference>
<dbReference type="GeneTree" id="ENSGT00940000157795"/>
<dbReference type="InParanoid" id="Q7TQH0"/>
<dbReference type="OrthoDB" id="2275718at2759"/>
<dbReference type="PhylomeDB" id="Q7TQH0"/>
<dbReference type="TreeFam" id="TF326591"/>
<dbReference type="BioGRID-ORCS" id="233871">
    <property type="hits" value="15 hits in 81 CRISPR screens"/>
</dbReference>
<dbReference type="ChiTaRS" id="Atxn2l">
    <property type="organism name" value="mouse"/>
</dbReference>
<dbReference type="PRO" id="PR:Q7TQH0"/>
<dbReference type="Proteomes" id="UP000000589">
    <property type="component" value="Chromosome 7"/>
</dbReference>
<dbReference type="RNAct" id="Q7TQH0">
    <property type="molecule type" value="protein"/>
</dbReference>
<dbReference type="Bgee" id="ENSMUSG00000032637">
    <property type="expression patterns" value="Expressed in animal zygote and 226 other cell types or tissues"/>
</dbReference>
<dbReference type="ExpressionAtlas" id="Q7TQH0">
    <property type="expression patterns" value="baseline and differential"/>
</dbReference>
<dbReference type="GO" id="GO:0010494">
    <property type="term" value="C:cytoplasmic stress granule"/>
    <property type="evidence" value="ECO:0000250"/>
    <property type="project" value="UniProtKB"/>
</dbReference>
<dbReference type="GO" id="GO:0016020">
    <property type="term" value="C:membrane"/>
    <property type="evidence" value="ECO:0000266"/>
    <property type="project" value="MGI"/>
</dbReference>
<dbReference type="GO" id="GO:0016607">
    <property type="term" value="C:nuclear speck"/>
    <property type="evidence" value="ECO:0000250"/>
    <property type="project" value="UniProtKB"/>
</dbReference>
<dbReference type="GO" id="GO:0003723">
    <property type="term" value="F:RNA binding"/>
    <property type="evidence" value="ECO:0007669"/>
    <property type="project" value="InterPro"/>
</dbReference>
<dbReference type="InterPro" id="IPR045117">
    <property type="entry name" value="ATXN2-like"/>
</dbReference>
<dbReference type="InterPro" id="IPR009604">
    <property type="entry name" value="LsmAD_domain"/>
</dbReference>
<dbReference type="InterPro" id="IPR009818">
    <property type="entry name" value="PAM2_motif"/>
</dbReference>
<dbReference type="InterPro" id="IPR047575">
    <property type="entry name" value="Sm"/>
</dbReference>
<dbReference type="InterPro" id="IPR025852">
    <property type="entry name" value="SM_dom_ATX"/>
</dbReference>
<dbReference type="PANTHER" id="PTHR12854">
    <property type="entry name" value="ATAXIN 2-RELATED"/>
    <property type="match status" value="1"/>
</dbReference>
<dbReference type="PANTHER" id="PTHR12854:SF8">
    <property type="entry name" value="ATAXIN-2-LIKE PROTEIN"/>
    <property type="match status" value="1"/>
</dbReference>
<dbReference type="Pfam" id="PF06741">
    <property type="entry name" value="LsmAD"/>
    <property type="match status" value="1"/>
</dbReference>
<dbReference type="Pfam" id="PF07145">
    <property type="entry name" value="PAM2"/>
    <property type="match status" value="1"/>
</dbReference>
<dbReference type="Pfam" id="PF14438">
    <property type="entry name" value="SM-ATX"/>
    <property type="match status" value="1"/>
</dbReference>
<dbReference type="SMART" id="SM01272">
    <property type="entry name" value="LsmAD"/>
    <property type="match status" value="1"/>
</dbReference>
<dbReference type="PROSITE" id="PS52002">
    <property type="entry name" value="SM"/>
    <property type="match status" value="1"/>
</dbReference>
<sequence>MLKPQPPQQTSQPQQPPPTQQAVARRSPGGTSPPNGGLPGPLTATAAPPGPPAAVSPCLGPAAAAGSGLRRGAESILAASAPPQHQERPGAVAIGSVRGQTTGKGPPQSPVFEGVYNNSRMLHFLTAVVGSTCDVKVKNGTTYEGIFKTLSSKFELAVDAVHRKASEPAGGPRREDIVDTMVFKPSDVLLVHFRNVDFNYATKDKFTDSAIAMNSKVNGEHKEKVLQRWEGGDSNSDDYDLESDMSNGWDPNEMFKFNEENYGVKTTYDSSLSSYTVPLEKDNSEEFRQRELRAAQLAREIESSPQYRLRIAMENDDGRTEEEKHSAVQRQGSGRESPSLVSREGKYIPLPQRVREGPRGGVRCSSSRGGRPGLSSLPPRGPHHLDNSSPGPGSEARGINGGPSRMSPKAQRPLRGAKTLSSPSNRPSGEASVPPTSAALPFLPVGRMYPPRSPKSAAPAPVSASCPEPPIGSAVASSASIPVTSSVVDPGAGSISPASPKLSLTPTDVKELPTKEPSRNLEAQELARIAGKVPGLQNEQKRFQLEELRKFGAQFKLQPSSSPETGLDPFPSRILKEEAKGKEKEVDGLLTSDPMGSPVSSKTESILDKEDKVPMAGVGGTEGPEQLPAPCPSQTGSPPVGLIKGDEKEEGPVTEQVKKSTLNPNAKEFNPTKPLLSVNKSTSTPTSPGPRTHSTPSIPVLTAGQSGLYSPQYISYIPQIHMGPAVQAPQMYPYPVSNSVPGQQGKYRGAKGSLPPQRSDQHQPASAPPMMQAAAAAAGPPLVAATPYSSYIPYNPQQFPGQPAMMQPMAHYPSQPVFAPMLQSNPRMLTSGSHPQAIVSSSTPQYPAAEQPTPQALYATVHQSYPHHATQLHGHQPQPATTPTGSQPQSQHAAPSPVQHQAGQAPHLGSGQPQQNLYHPGALTGTPPSLPPGPSAQSPQSSFPQPAAVYAIHPHQQLPHGFTNMAHVTQAHVQTGVTAAPPPHPGAPHPPQVMLLHPPQGHGGPPQGAVPPSGVPALSASTPSPYPYIGHPQVQSHPSQQLPFHPPGN</sequence>
<comment type="function">
    <text evidence="2">Involved in the regulation of stress granule and P-body formation.</text>
</comment>
<comment type="subunit">
    <text evidence="2 5">Interacts with MPL/TPOR and EPOR and dissociates after ligand stimulation. Interacts with DDX6, G3BP, and ATXN2. Interacts with PRMT1 (By similarity). Interacts with CIC and ATXN1 (PubMed:17322884).</text>
</comment>
<comment type="subcellular location">
    <subcellularLocation>
        <location evidence="1">Membrane</location>
        <topology evidence="1">Peripheral membrane protein</topology>
    </subcellularLocation>
    <subcellularLocation>
        <location evidence="2">Cytoplasm</location>
    </subcellularLocation>
    <subcellularLocation>
        <location evidence="2">Nucleus speckle</location>
    </subcellularLocation>
    <subcellularLocation>
        <location evidence="2">Cytoplasmic granule</location>
    </subcellularLocation>
    <text evidence="2">Predominantly cytoplasmic but is also detected in nuclear speckles. Component of cytoplasmic stress granules. Inhibition of methylation alters nuclear localization. Methylation does not seem to be required for localization to stress granules under stress conditions.</text>
</comment>
<comment type="alternative products">
    <event type="alternative splicing"/>
    <isoform>
        <id>Q7TQH0-1</id>
        <name>1</name>
        <sequence type="displayed"/>
    </isoform>
    <isoform>
        <id>Q7TQH0-2</id>
        <name>2</name>
        <sequence type="described" ref="VSP_011595 VSP_011596"/>
    </isoform>
    <isoform>
        <id>Q7TQH0-3</id>
        <name>3</name>
        <sequence type="described" ref="VSP_011595"/>
    </isoform>
</comment>
<comment type="tissue specificity">
    <text evidence="5">Expressed in cerebellum.</text>
</comment>
<comment type="PTM">
    <text evidence="1">Thrombopoietin triggers the phosphorylation on tyrosine residues in a way that is dependent on MPL C-terminal domain.</text>
</comment>
<comment type="PTM">
    <text evidence="2">Asymmetrically dimethylated. Probably methylated by PRMT1.</text>
</comment>
<comment type="similarity">
    <text evidence="7">Belongs to the ataxin-2 family.</text>
</comment>
<gene>
    <name type="primary">Atxn2l</name>
    <name type="synonym">A2lp</name>
</gene>
<name>ATX2L_MOUSE</name>
<proteinExistence type="evidence at protein level"/>
<evidence type="ECO:0000250" key="1"/>
<evidence type="ECO:0000250" key="2">
    <source>
        <dbReference type="UniProtKB" id="Q8WWM7"/>
    </source>
</evidence>
<evidence type="ECO:0000255" key="3">
    <source>
        <dbReference type="PROSITE-ProRule" id="PRU01346"/>
    </source>
</evidence>
<evidence type="ECO:0000256" key="4">
    <source>
        <dbReference type="SAM" id="MobiDB-lite"/>
    </source>
</evidence>
<evidence type="ECO:0000269" key="5">
    <source>
    </source>
</evidence>
<evidence type="ECO:0000303" key="6">
    <source>
    </source>
</evidence>
<evidence type="ECO:0000305" key="7"/>
<evidence type="ECO:0007744" key="8">
    <source>
    </source>
</evidence>
<evidence type="ECO:0007744" key="9">
    <source>
    </source>
</evidence>
<evidence type="ECO:0007744" key="10">
    <source>
    </source>
</evidence>
<evidence type="ECO:0007744" key="11">
    <source>
    </source>
</evidence>
<evidence type="ECO:0007744" key="12">
    <source>
    </source>
</evidence>
<reference key="1">
    <citation type="journal article" date="2004" name="Genome Res.">
        <title>The status, quality, and expansion of the NIH full-length cDNA project: the Mammalian Gene Collection (MGC).</title>
        <authorList>
            <consortium name="The MGC Project Team"/>
        </authorList>
    </citation>
    <scope>NUCLEOTIDE SEQUENCE [LARGE SCALE MRNA] (ISOFORM 1)</scope>
    <scope>NUCLEOTIDE SEQUENCE [LARGE SCALE MRNA] OF 239-1049 (ISOFORM 2)</scope>
    <scope>NUCLEOTIDE SEQUENCE [LARGE SCALE MRNA] OF 266-1049 (ISOFORM 3)</scope>
    <source>
        <tissue>Colon</tissue>
        <tissue>Kidney</tissue>
        <tissue>Olfactory epithelium</tissue>
    </source>
</reference>
<reference key="2">
    <citation type="journal article" date="2007" name="Mol. Cell. Proteomics">
        <title>Qualitative and quantitative analyses of protein phosphorylation in naive and stimulated mouse synaptosomal preparations.</title>
        <authorList>
            <person name="Munton R.P."/>
            <person name="Tweedie-Cullen R."/>
            <person name="Livingstone-Zatchej M."/>
            <person name="Weinandy F."/>
            <person name="Waidelich M."/>
            <person name="Longo D."/>
            <person name="Gehrig P."/>
            <person name="Potthast F."/>
            <person name="Rutishauser D."/>
            <person name="Gerrits B."/>
            <person name="Panse C."/>
            <person name="Schlapbach R."/>
            <person name="Mansuy I.M."/>
        </authorList>
    </citation>
    <scope>IDENTIFICATION BY MASS SPECTROMETRY [LARGE SCALE ANALYSIS]</scope>
    <source>
        <tissue>Brain cortex</tissue>
    </source>
</reference>
<reference key="3">
    <citation type="journal article" date="2007" name="Nat. Genet.">
        <title>Duplication of Atxn1l suppresses SCA1 neuropathology by decreasing incorporation of polyglutamine-expanded ataxin-1 into native complexes.</title>
        <authorList>
            <person name="Bowman A.B."/>
            <person name="Lam Y.C."/>
            <person name="Jafar-Nejad P."/>
            <person name="Chen H.-K."/>
            <person name="Richman R."/>
            <person name="Samaco R.C."/>
            <person name="Fryer J.D."/>
            <person name="Kahle J.J."/>
            <person name="Orr H.T."/>
            <person name="Zoghbi H.Y."/>
        </authorList>
    </citation>
    <scope>INTERACTION WITH CIC AND ATXN1</scope>
    <scope>TISSUE SPECIFICITY</scope>
</reference>
<reference key="4">
    <citation type="journal article" date="2007" name="Proc. Natl. Acad. Sci. U.S.A.">
        <title>Large-scale phosphorylation analysis of mouse liver.</title>
        <authorList>
            <person name="Villen J."/>
            <person name="Beausoleil S.A."/>
            <person name="Gerber S.A."/>
            <person name="Gygi S.P."/>
        </authorList>
    </citation>
    <scope>PHOSPHORYLATION [LARGE SCALE ANALYSIS] AT SER-109; SER-496 AND SER-499</scope>
    <scope>IDENTIFICATION BY MASS SPECTROMETRY [LARGE SCALE ANALYSIS]</scope>
    <source>
        <tissue>Liver</tissue>
    </source>
</reference>
<reference key="5">
    <citation type="journal article" date="2009" name="Immunity">
        <title>The phagosomal proteome in interferon-gamma-activated macrophages.</title>
        <authorList>
            <person name="Trost M."/>
            <person name="English L."/>
            <person name="Lemieux S."/>
            <person name="Courcelles M."/>
            <person name="Desjardins M."/>
            <person name="Thibault P."/>
        </authorList>
    </citation>
    <scope>PHOSPHORYLATION [LARGE SCALE ANALYSIS] AT SER-109 AND SER-597</scope>
    <scope>IDENTIFICATION BY MASS SPECTROMETRY [LARGE SCALE ANALYSIS]</scope>
</reference>
<reference key="6">
    <citation type="journal article" date="2009" name="Mol. Cell. Proteomics">
        <title>Large scale localization of protein phosphorylation by use of electron capture dissociation mass spectrometry.</title>
        <authorList>
            <person name="Sweet S.M."/>
            <person name="Bailey C.M."/>
            <person name="Cunningham D.L."/>
            <person name="Heath J.K."/>
            <person name="Cooper H.J."/>
        </authorList>
    </citation>
    <scope>PHOSPHORYLATION [LARGE SCALE ANALYSIS] AT SER-109</scope>
    <scope>IDENTIFICATION BY MASS SPECTROMETRY [LARGE SCALE ANALYSIS]</scope>
    <source>
        <tissue>Embryonic fibroblast</tissue>
    </source>
</reference>
<reference key="7">
    <citation type="journal article" date="2010" name="Cell">
        <title>A tissue-specific atlas of mouse protein phosphorylation and expression.</title>
        <authorList>
            <person name="Huttlin E.L."/>
            <person name="Jedrychowski M.P."/>
            <person name="Elias J.E."/>
            <person name="Goswami T."/>
            <person name="Rad R."/>
            <person name="Beausoleil S.A."/>
            <person name="Villen J."/>
            <person name="Haas W."/>
            <person name="Sowa M.E."/>
            <person name="Gygi S.P."/>
        </authorList>
    </citation>
    <scope>PHOSPHORYLATION [LARGE SCALE ANALYSIS] AT SER-27; THR-45; SER-109; SER-236; SER-407; SER-496; SER-499; SER-560; SER-597 AND SER-637</scope>
    <scope>IDENTIFICATION BY MASS SPECTROMETRY [LARGE SCALE ANALYSIS]</scope>
    <source>
        <tissue>Brain</tissue>
        <tissue>Brown adipose tissue</tissue>
        <tissue>Heart</tissue>
        <tissue>Kidney</tissue>
        <tissue>Liver</tissue>
        <tissue>Lung</tissue>
        <tissue>Pancreas</tissue>
        <tissue>Spleen</tissue>
        <tissue>Testis</tissue>
    </source>
</reference>
<reference key="8">
    <citation type="journal article" date="2013" name="Mol. Cell">
        <title>SIRT5-mediated lysine desuccinylation impacts diverse metabolic pathways.</title>
        <authorList>
            <person name="Park J."/>
            <person name="Chen Y."/>
            <person name="Tishkoff D.X."/>
            <person name="Peng C."/>
            <person name="Tan M."/>
            <person name="Dai L."/>
            <person name="Xie Z."/>
            <person name="Zhang Y."/>
            <person name="Zwaans B.M."/>
            <person name="Skinner M.E."/>
            <person name="Lombard D.B."/>
            <person name="Zhao Y."/>
        </authorList>
    </citation>
    <scope>ACETYLATION [LARGE SCALE ANALYSIS] AT LYS-205</scope>
    <scope>IDENTIFICATION BY MASS SPECTROMETRY [LARGE SCALE ANALYSIS]</scope>
    <source>
        <tissue>Embryonic fibroblast</tissue>
    </source>
</reference>
<keyword id="KW-0007">Acetylation</keyword>
<keyword id="KW-0025">Alternative splicing</keyword>
<keyword id="KW-0963">Cytoplasm</keyword>
<keyword id="KW-1017">Isopeptide bond</keyword>
<keyword id="KW-0472">Membrane</keyword>
<keyword id="KW-0488">Methylation</keyword>
<keyword id="KW-0539">Nucleus</keyword>
<keyword id="KW-0597">Phosphoprotein</keyword>
<keyword id="KW-1185">Reference proteome</keyword>
<keyword id="KW-0832">Ubl conjugation</keyword>
<accession>Q7TQH0</accession>
<accession>Q80XN9</accession>
<accession>Q8K059</accession>
<organism>
    <name type="scientific">Mus musculus</name>
    <name type="common">Mouse</name>
    <dbReference type="NCBI Taxonomy" id="10090"/>
    <lineage>
        <taxon>Eukaryota</taxon>
        <taxon>Metazoa</taxon>
        <taxon>Chordata</taxon>
        <taxon>Craniata</taxon>
        <taxon>Vertebrata</taxon>
        <taxon>Euteleostomi</taxon>
        <taxon>Mammalia</taxon>
        <taxon>Eutheria</taxon>
        <taxon>Euarchontoglires</taxon>
        <taxon>Glires</taxon>
        <taxon>Rodentia</taxon>
        <taxon>Myomorpha</taxon>
        <taxon>Muroidea</taxon>
        <taxon>Muridae</taxon>
        <taxon>Murinae</taxon>
        <taxon>Mus</taxon>
        <taxon>Mus</taxon>
    </lineage>
</organism>
<feature type="chain" id="PRO_0000064755" description="Ataxin-2-like protein">
    <location>
        <begin position="1"/>
        <end position="1049"/>
    </location>
</feature>
<feature type="domain" description="Sm" evidence="3">
    <location>
        <begin position="120"/>
        <end position="197"/>
    </location>
</feature>
<feature type="region of interest" description="Disordered" evidence="4">
    <location>
        <begin position="1"/>
        <end position="54"/>
    </location>
</feature>
<feature type="region of interest" description="Interaction with MPL" evidence="1">
    <location>
        <begin position="96"/>
        <end position="119"/>
    </location>
</feature>
<feature type="region of interest" description="Disordered" evidence="4">
    <location>
        <begin position="314"/>
        <end position="522"/>
    </location>
</feature>
<feature type="region of interest" description="Disordered" evidence="4">
    <location>
        <begin position="554"/>
        <end position="573"/>
    </location>
</feature>
<feature type="region of interest" description="Disordered" evidence="4">
    <location>
        <begin position="578"/>
        <end position="704"/>
    </location>
</feature>
<feature type="region of interest" description="Disordered" evidence="4">
    <location>
        <begin position="736"/>
        <end position="772"/>
    </location>
</feature>
<feature type="region of interest" description="Disordered" evidence="4">
    <location>
        <begin position="824"/>
        <end position="852"/>
    </location>
</feature>
<feature type="region of interest" description="Disordered" evidence="4">
    <location>
        <begin position="868"/>
        <end position="944"/>
    </location>
</feature>
<feature type="region of interest" description="Disordered" evidence="4">
    <location>
        <begin position="999"/>
        <end position="1049"/>
    </location>
</feature>
<feature type="compositionally biased region" description="Basic and acidic residues" evidence="4">
    <location>
        <begin position="314"/>
        <end position="326"/>
    </location>
</feature>
<feature type="compositionally biased region" description="Polar residues" evidence="4">
    <location>
        <begin position="328"/>
        <end position="340"/>
    </location>
</feature>
<feature type="compositionally biased region" description="Low complexity" evidence="4">
    <location>
        <begin position="361"/>
        <end position="378"/>
    </location>
</feature>
<feature type="compositionally biased region" description="Low complexity" evidence="4">
    <location>
        <begin position="454"/>
        <end position="466"/>
    </location>
</feature>
<feature type="compositionally biased region" description="Polar residues" evidence="4">
    <location>
        <begin position="475"/>
        <end position="487"/>
    </location>
</feature>
<feature type="compositionally biased region" description="Basic and acidic residues" evidence="4">
    <location>
        <begin position="508"/>
        <end position="519"/>
    </location>
</feature>
<feature type="compositionally biased region" description="Basic and acidic residues" evidence="4">
    <location>
        <begin position="578"/>
        <end position="587"/>
    </location>
</feature>
<feature type="compositionally biased region" description="Low complexity" evidence="4">
    <location>
        <begin position="681"/>
        <end position="697"/>
    </location>
</feature>
<feature type="compositionally biased region" description="Polar residues" evidence="4">
    <location>
        <begin position="824"/>
        <end position="845"/>
    </location>
</feature>
<feature type="compositionally biased region" description="Polar residues" evidence="4">
    <location>
        <begin position="878"/>
        <end position="902"/>
    </location>
</feature>
<feature type="compositionally biased region" description="Low complexity" evidence="4">
    <location>
        <begin position="935"/>
        <end position="944"/>
    </location>
</feature>
<feature type="compositionally biased region" description="Polar residues" evidence="4">
    <location>
        <begin position="1033"/>
        <end position="1042"/>
    </location>
</feature>
<feature type="modified residue" description="N-acetylmethionine" evidence="2">
    <location>
        <position position="1"/>
    </location>
</feature>
<feature type="modified residue" description="Phosphoserine" evidence="11">
    <location>
        <position position="27"/>
    </location>
</feature>
<feature type="modified residue" description="Phosphothreonine" evidence="11">
    <location>
        <position position="45"/>
    </location>
</feature>
<feature type="modified residue" description="Phosphoserine" evidence="8 9 10 11">
    <location>
        <position position="109"/>
    </location>
</feature>
<feature type="modified residue" description="Phosphotyrosine" evidence="2">
    <location>
        <position position="116"/>
    </location>
</feature>
<feature type="modified residue" description="N6-acetyllysine" evidence="12">
    <location>
        <position position="205"/>
    </location>
</feature>
<feature type="modified residue" description="Phosphoserine" evidence="11">
    <location>
        <position position="236"/>
    </location>
</feature>
<feature type="modified residue" description="Phosphotyrosine" evidence="2">
    <location>
        <position position="262"/>
    </location>
</feature>
<feature type="modified residue" description="Phosphoserine" evidence="2">
    <location>
        <position position="304"/>
    </location>
</feature>
<feature type="modified residue" description="Phosphotyrosine" evidence="2">
    <location>
        <position position="307"/>
    </location>
</feature>
<feature type="modified residue" description="Phosphoserine" evidence="2">
    <location>
        <position position="333"/>
    </location>
</feature>
<feature type="modified residue" description="Phosphoserine" evidence="2">
    <location>
        <position position="337"/>
    </location>
</feature>
<feature type="modified residue" description="Phosphotyrosine" evidence="2">
    <location>
        <position position="347"/>
    </location>
</feature>
<feature type="modified residue" description="Asymmetric dimethylarginine" evidence="2">
    <location>
        <position position="359"/>
    </location>
</feature>
<feature type="modified residue" description="Phosphoserine" evidence="2">
    <location>
        <position position="389"/>
    </location>
</feature>
<feature type="modified residue" description="Phosphoserine" evidence="11">
    <location>
        <position position="407"/>
    </location>
</feature>
<feature type="modified residue" description="Phosphoserine" evidence="2">
    <location>
        <position position="453"/>
    </location>
</feature>
<feature type="modified residue" description="Phosphoserine" evidence="8 11">
    <location>
        <position position="496"/>
    </location>
</feature>
<feature type="modified residue" description="Phosphoserine" evidence="8 11">
    <location>
        <position position="499"/>
    </location>
</feature>
<feature type="modified residue" description="Phosphoserine" evidence="11">
    <location>
        <position position="560"/>
    </location>
</feature>
<feature type="modified residue" description="Phosphoserine" evidence="2">
    <location>
        <position position="561"/>
    </location>
</feature>
<feature type="modified residue" description="Phosphoserine" evidence="2">
    <location>
        <position position="562"/>
    </location>
</feature>
<feature type="modified residue" description="Phosphoserine" evidence="10 11">
    <location>
        <position position="597"/>
    </location>
</feature>
<feature type="modified residue" description="Phosphothreonine" evidence="2">
    <location>
        <position position="635"/>
    </location>
</feature>
<feature type="modified residue" description="Phosphoserine" evidence="11">
    <location>
        <position position="637"/>
    </location>
</feature>
<feature type="modified residue" description="Phosphoserine" evidence="2">
    <location>
        <position position="677"/>
    </location>
</feature>
<feature type="modified residue" description="Phosphoserine" evidence="2">
    <location>
        <position position="683"/>
    </location>
</feature>
<feature type="modified residue" description="Phosphoserine" evidence="2">
    <location>
        <position position="687"/>
    </location>
</feature>
<feature type="cross-link" description="Glycyl lysine isopeptide (Lys-Gly) (interchain with G-Cter in SUMO2)" evidence="2">
    <location>
        <position position="346"/>
    </location>
</feature>
<feature type="splice variant" id="VSP_011595" description="In isoform 2 and isoform 3." evidence="6">
    <location>
        <begin position="439"/>
        <end position="444"/>
    </location>
</feature>
<feature type="splice variant" id="VSP_011596" description="In isoform 2." evidence="6">
    <original>VQSHPSQQLPFHPPGN</original>
    <variation>GEQPGQAPGFPGGADDRIREFSLAGGIWHGRAEGLQVGQDARVLGGD</variation>
    <location>
        <begin position="1034"/>
        <end position="1049"/>
    </location>
</feature>
<protein>
    <recommendedName>
        <fullName>Ataxin-2-like protein</fullName>
    </recommendedName>
</protein>